<proteinExistence type="inferred from homology"/>
<accession>B1MN97</accession>
<reference key="1">
    <citation type="journal article" date="2009" name="PLoS ONE">
        <title>Non mycobacterial virulence genes in the genome of the emerging pathogen Mycobacterium abscessus.</title>
        <authorList>
            <person name="Ripoll F."/>
            <person name="Pasek S."/>
            <person name="Schenowitz C."/>
            <person name="Dossat C."/>
            <person name="Barbe V."/>
            <person name="Rottman M."/>
            <person name="Macheras E."/>
            <person name="Heym B."/>
            <person name="Herrmann J.L."/>
            <person name="Daffe M."/>
            <person name="Brosch R."/>
            <person name="Risler J.L."/>
            <person name="Gaillard J.L."/>
        </authorList>
    </citation>
    <scope>NUCLEOTIDE SEQUENCE [LARGE SCALE GENOMIC DNA]</scope>
    <source>
        <strain>ATCC 19977 / DSM 44196 / CCUG 20993 / CIP 104536 / JCM 13569 / NCTC 13031 / TMC 1543 / L948</strain>
    </source>
</reference>
<sequence>MAKGKRTFQPNNRRRARTHGFRLRMRTRAGRAIIAGRRRKGRRELTA</sequence>
<feature type="chain" id="PRO_1000196070" description="Large ribosomal subunit protein bL34">
    <location>
        <begin position="1"/>
        <end position="47"/>
    </location>
</feature>
<dbReference type="EMBL" id="CU458896">
    <property type="protein sequence ID" value="CAM65023.1"/>
    <property type="molecule type" value="Genomic_DNA"/>
</dbReference>
<dbReference type="RefSeq" id="WP_005072119.1">
    <property type="nucleotide sequence ID" value="NZ_MLCG01000007.1"/>
</dbReference>
<dbReference type="SMR" id="B1MN97"/>
<dbReference type="GeneID" id="93381893"/>
<dbReference type="KEGG" id="mab:MAB_4955c"/>
<dbReference type="Proteomes" id="UP000007137">
    <property type="component" value="Chromosome"/>
</dbReference>
<dbReference type="GO" id="GO:1990904">
    <property type="term" value="C:ribonucleoprotein complex"/>
    <property type="evidence" value="ECO:0007669"/>
    <property type="project" value="UniProtKB-KW"/>
</dbReference>
<dbReference type="GO" id="GO:0005840">
    <property type="term" value="C:ribosome"/>
    <property type="evidence" value="ECO:0007669"/>
    <property type="project" value="UniProtKB-KW"/>
</dbReference>
<dbReference type="GO" id="GO:0003735">
    <property type="term" value="F:structural constituent of ribosome"/>
    <property type="evidence" value="ECO:0007669"/>
    <property type="project" value="InterPro"/>
</dbReference>
<dbReference type="GO" id="GO:0006412">
    <property type="term" value="P:translation"/>
    <property type="evidence" value="ECO:0007669"/>
    <property type="project" value="UniProtKB-UniRule"/>
</dbReference>
<dbReference type="FunFam" id="1.10.287.3980:FF:000001">
    <property type="entry name" value="Mitochondrial ribosomal protein L34"/>
    <property type="match status" value="1"/>
</dbReference>
<dbReference type="Gene3D" id="1.10.287.3980">
    <property type="match status" value="1"/>
</dbReference>
<dbReference type="HAMAP" id="MF_00391">
    <property type="entry name" value="Ribosomal_bL34"/>
    <property type="match status" value="1"/>
</dbReference>
<dbReference type="InterPro" id="IPR000271">
    <property type="entry name" value="Ribosomal_bL34"/>
</dbReference>
<dbReference type="InterPro" id="IPR020939">
    <property type="entry name" value="Ribosomal_bL34_CS"/>
</dbReference>
<dbReference type="NCBIfam" id="TIGR01030">
    <property type="entry name" value="rpmH_bact"/>
    <property type="match status" value="1"/>
</dbReference>
<dbReference type="PANTHER" id="PTHR14503:SF4">
    <property type="entry name" value="LARGE RIBOSOMAL SUBUNIT PROTEIN BL34M"/>
    <property type="match status" value="1"/>
</dbReference>
<dbReference type="PANTHER" id="PTHR14503">
    <property type="entry name" value="MITOCHONDRIAL RIBOSOMAL PROTEIN 34 FAMILY MEMBER"/>
    <property type="match status" value="1"/>
</dbReference>
<dbReference type="Pfam" id="PF00468">
    <property type="entry name" value="Ribosomal_L34"/>
    <property type="match status" value="1"/>
</dbReference>
<dbReference type="PROSITE" id="PS00784">
    <property type="entry name" value="RIBOSOMAL_L34"/>
    <property type="match status" value="1"/>
</dbReference>
<gene>
    <name evidence="1" type="primary">rpmH</name>
    <name type="ordered locus">MAB_4955c</name>
</gene>
<evidence type="ECO:0000255" key="1">
    <source>
        <dbReference type="HAMAP-Rule" id="MF_00391"/>
    </source>
</evidence>
<evidence type="ECO:0000305" key="2"/>
<keyword id="KW-1185">Reference proteome</keyword>
<keyword id="KW-0687">Ribonucleoprotein</keyword>
<keyword id="KW-0689">Ribosomal protein</keyword>
<name>RL34_MYCA9</name>
<organism>
    <name type="scientific">Mycobacteroides abscessus (strain ATCC 19977 / DSM 44196 / CCUG 20993 / CIP 104536 / JCM 13569 / NCTC 13031 / TMC 1543 / L948)</name>
    <name type="common">Mycobacterium abscessus</name>
    <dbReference type="NCBI Taxonomy" id="561007"/>
    <lineage>
        <taxon>Bacteria</taxon>
        <taxon>Bacillati</taxon>
        <taxon>Actinomycetota</taxon>
        <taxon>Actinomycetes</taxon>
        <taxon>Mycobacteriales</taxon>
        <taxon>Mycobacteriaceae</taxon>
        <taxon>Mycobacteroides</taxon>
        <taxon>Mycobacteroides abscessus</taxon>
    </lineage>
</organism>
<protein>
    <recommendedName>
        <fullName evidence="1">Large ribosomal subunit protein bL34</fullName>
    </recommendedName>
    <alternativeName>
        <fullName evidence="2">50S ribosomal protein L34</fullName>
    </alternativeName>
</protein>
<comment type="similarity">
    <text evidence="1">Belongs to the bacterial ribosomal protein bL34 family.</text>
</comment>